<keyword id="KW-0007">Acetylation</keyword>
<keyword id="KW-0067">ATP-binding</keyword>
<keyword id="KW-0963">Cytoplasm</keyword>
<keyword id="KW-0256">Endoplasmic reticulum</keyword>
<keyword id="KW-0418">Kinase</keyword>
<keyword id="KW-0443">Lipid metabolism</keyword>
<keyword id="KW-0547">Nucleotide-binding</keyword>
<keyword id="KW-0597">Phosphoprotein</keyword>
<keyword id="KW-1185">Reference proteome</keyword>
<keyword id="KW-0808">Transferase</keyword>
<comment type="function">
    <text evidence="1 3">Phosphatidylinositol 5-phosphate 4-kinase with low enzymatic activity (PubMed:9685379). May be a GTP sensor, has higher GTP-dependent kinase activity than ATP-dependent kinase activity (By similarity). PIP4Ks negatively regulate insulin signaling through a catalytic-independent mechanism. They interact with PIP5Ks and suppress PIP5K-mediated PtdIns(4,5)P2 synthesis and insulin-dependent conversion to PtdIns(3,4,5)P3 (By similarity).</text>
</comment>
<comment type="catalytic activity">
    <reaction evidence="3">
        <text>a 1,2-diacyl-sn-glycero-3-phospho-(1D-myo-inositol-5-phosphate) + ATP = a 1,2-diacyl-sn-glycero-3-phospho-(1D-myo-inositol-4,5-bisphosphate) + ADP + H(+)</text>
        <dbReference type="Rhea" id="RHEA:12280"/>
        <dbReference type="ChEBI" id="CHEBI:15378"/>
        <dbReference type="ChEBI" id="CHEBI:30616"/>
        <dbReference type="ChEBI" id="CHEBI:57795"/>
        <dbReference type="ChEBI" id="CHEBI:58456"/>
        <dbReference type="ChEBI" id="CHEBI:456216"/>
        <dbReference type="EC" id="2.7.1.149"/>
    </reaction>
    <physiologicalReaction direction="left-to-right" evidence="5">
        <dbReference type="Rhea" id="RHEA:12281"/>
    </physiologicalReaction>
</comment>
<comment type="catalytic activity">
    <reaction evidence="1">
        <text>1,2-dihexadecanoyl-sn-glycero-3-phospho-(1D-myo-inositol-5-phosphate) + ATP = 1,2-dihexadecanoyl-sn-glycero-3-phospho-(1D-myo-inositol-4,5-bisphosphate) + ADP + H(+)</text>
        <dbReference type="Rhea" id="RHEA:55992"/>
        <dbReference type="ChEBI" id="CHEBI:15378"/>
        <dbReference type="ChEBI" id="CHEBI:30616"/>
        <dbReference type="ChEBI" id="CHEBI:83423"/>
        <dbReference type="ChEBI" id="CHEBI:84968"/>
        <dbReference type="ChEBI" id="CHEBI:456216"/>
    </reaction>
    <physiologicalReaction direction="left-to-right" evidence="1">
        <dbReference type="Rhea" id="RHEA:55993"/>
    </physiologicalReaction>
</comment>
<comment type="catalytic activity">
    <reaction evidence="1">
        <text>1,2-dihexadecanoyl-sn-glycero-3-phospho-(1D-myo-inositol-5-phosphate) + GTP = 1,2-dihexadecanoyl-sn-glycero-3-phospho-(1D-myo-inositol-4,5-bisphosphate) + GDP + H(+)</text>
        <dbReference type="Rhea" id="RHEA:55964"/>
        <dbReference type="ChEBI" id="CHEBI:15378"/>
        <dbReference type="ChEBI" id="CHEBI:37565"/>
        <dbReference type="ChEBI" id="CHEBI:58189"/>
        <dbReference type="ChEBI" id="CHEBI:83423"/>
        <dbReference type="ChEBI" id="CHEBI:84968"/>
    </reaction>
    <physiologicalReaction direction="left-to-right" evidence="1">
        <dbReference type="Rhea" id="RHEA:55965"/>
    </physiologicalReaction>
</comment>
<comment type="subunit">
    <text evidence="1">Interacts with PIP5K1A; the interaction inhibits PIP5K1A kinase activity.</text>
</comment>
<comment type="subcellular location">
    <subcellularLocation>
        <location evidence="3">Endoplasmic reticulum</location>
    </subcellularLocation>
    <subcellularLocation>
        <location evidence="3">Cytoplasm</location>
    </subcellularLocation>
</comment>
<comment type="tissue specificity">
    <text evidence="3">Widely expressed, with the most abundant expression in kidney.</text>
</comment>
<comment type="PTM">
    <text evidence="3">Phosphorylated, phosphorylation is induced by EGF.</text>
</comment>
<name>PI42C_RAT</name>
<dbReference type="EC" id="2.7.1.149" evidence="3"/>
<dbReference type="EMBL" id="AF030558">
    <property type="protein sequence ID" value="AAC40202.1"/>
    <property type="molecule type" value="mRNA"/>
</dbReference>
<dbReference type="RefSeq" id="NP_536728.2">
    <property type="nucleotide sequence ID" value="NM_080480.2"/>
</dbReference>
<dbReference type="SMR" id="O88370"/>
<dbReference type="FunCoup" id="O88370">
    <property type="interactions" value="2374"/>
</dbReference>
<dbReference type="STRING" id="10116.ENSRNOP00000061758"/>
<dbReference type="iPTMnet" id="O88370"/>
<dbReference type="PhosphoSitePlus" id="O88370"/>
<dbReference type="jPOST" id="O88370"/>
<dbReference type="PaxDb" id="10116-ENSRNOP00000061758"/>
<dbReference type="GeneID" id="140607"/>
<dbReference type="KEGG" id="rno:140607"/>
<dbReference type="UCSC" id="RGD:621711">
    <property type="organism name" value="rat"/>
</dbReference>
<dbReference type="AGR" id="RGD:621711"/>
<dbReference type="CTD" id="79837"/>
<dbReference type="RGD" id="621711">
    <property type="gene designation" value="Pip4k2c"/>
</dbReference>
<dbReference type="VEuPathDB" id="HostDB:ENSRNOG00000005138"/>
<dbReference type="eggNOG" id="KOG0229">
    <property type="taxonomic scope" value="Eukaryota"/>
</dbReference>
<dbReference type="InParanoid" id="O88370"/>
<dbReference type="OrthoDB" id="20783at2759"/>
<dbReference type="PhylomeDB" id="O88370"/>
<dbReference type="Reactome" id="R-RNO-1660499">
    <property type="pathway name" value="Synthesis of PIPs at the plasma membrane"/>
</dbReference>
<dbReference type="Reactome" id="R-RNO-6811555">
    <property type="pathway name" value="PI5P Regulates TP53 Acetylation"/>
</dbReference>
<dbReference type="Reactome" id="R-RNO-6811558">
    <property type="pathway name" value="PI5P, PP2A and IER3 Regulate PI3K/AKT Signaling"/>
</dbReference>
<dbReference type="Reactome" id="R-RNO-8847453">
    <property type="pathway name" value="Synthesis of PIPs in the nucleus"/>
</dbReference>
<dbReference type="PRO" id="PR:O88370"/>
<dbReference type="Proteomes" id="UP000002494">
    <property type="component" value="Chromosome 7"/>
</dbReference>
<dbReference type="Bgee" id="ENSRNOG00000005138">
    <property type="expression patterns" value="Expressed in adult mammalian kidney and 19 other cell types or tissues"/>
</dbReference>
<dbReference type="ExpressionAtlas" id="O88370">
    <property type="expression patterns" value="baseline and differential"/>
</dbReference>
<dbReference type="GO" id="GO:0005776">
    <property type="term" value="C:autophagosome"/>
    <property type="evidence" value="ECO:0000266"/>
    <property type="project" value="RGD"/>
</dbReference>
<dbReference type="GO" id="GO:0005783">
    <property type="term" value="C:endoplasmic reticulum"/>
    <property type="evidence" value="ECO:0007669"/>
    <property type="project" value="UniProtKB-SubCell"/>
</dbReference>
<dbReference type="GO" id="GO:0043231">
    <property type="term" value="C:intracellular membrane-bounded organelle"/>
    <property type="evidence" value="ECO:0000266"/>
    <property type="project" value="RGD"/>
</dbReference>
<dbReference type="GO" id="GO:0005886">
    <property type="term" value="C:plasma membrane"/>
    <property type="evidence" value="ECO:0000318"/>
    <property type="project" value="GO_Central"/>
</dbReference>
<dbReference type="GO" id="GO:0016308">
    <property type="term" value="F:1-phosphatidylinositol-4-phosphate 5-kinase activity"/>
    <property type="evidence" value="ECO:0000314"/>
    <property type="project" value="RGD"/>
</dbReference>
<dbReference type="GO" id="GO:0016309">
    <property type="term" value="F:1-phosphatidylinositol-5-phosphate 4-kinase activity"/>
    <property type="evidence" value="ECO:0000318"/>
    <property type="project" value="GO_Central"/>
</dbReference>
<dbReference type="GO" id="GO:0005524">
    <property type="term" value="F:ATP binding"/>
    <property type="evidence" value="ECO:0007669"/>
    <property type="project" value="UniProtKB-KW"/>
</dbReference>
<dbReference type="GO" id="GO:0042802">
    <property type="term" value="F:identical protein binding"/>
    <property type="evidence" value="ECO:0000266"/>
    <property type="project" value="RGD"/>
</dbReference>
<dbReference type="GO" id="GO:1902635">
    <property type="term" value="P:1-phosphatidyl-1D-myo-inositol 4,5-bisphosphate biosynthetic process"/>
    <property type="evidence" value="ECO:0000250"/>
    <property type="project" value="UniProtKB"/>
</dbReference>
<dbReference type="GO" id="GO:0046627">
    <property type="term" value="P:negative regulation of insulin receptor signaling pathway"/>
    <property type="evidence" value="ECO:0000250"/>
    <property type="project" value="UniProtKB"/>
</dbReference>
<dbReference type="GO" id="GO:0006661">
    <property type="term" value="P:phosphatidylinositol biosynthetic process"/>
    <property type="evidence" value="ECO:0000303"/>
    <property type="project" value="RGD"/>
</dbReference>
<dbReference type="GO" id="GO:0046854">
    <property type="term" value="P:phosphatidylinositol phosphate biosynthetic process"/>
    <property type="evidence" value="ECO:0000318"/>
    <property type="project" value="GO_Central"/>
</dbReference>
<dbReference type="GO" id="GO:2000786">
    <property type="term" value="P:positive regulation of autophagosome assembly"/>
    <property type="evidence" value="ECO:0000266"/>
    <property type="project" value="RGD"/>
</dbReference>
<dbReference type="GO" id="GO:0010506">
    <property type="term" value="P:regulation of autophagy"/>
    <property type="evidence" value="ECO:0000266"/>
    <property type="project" value="RGD"/>
</dbReference>
<dbReference type="FunFam" id="3.30.800.10:FF:000002">
    <property type="entry name" value="Phosphatidylinositol 5-phosphate 4-kinase type-2 beta"/>
    <property type="match status" value="1"/>
</dbReference>
<dbReference type="FunFam" id="3.30.810.10:FF:000004">
    <property type="entry name" value="Phosphatidylinositol 5-phosphate 4-kinase type-2 beta"/>
    <property type="match status" value="1"/>
</dbReference>
<dbReference type="Gene3D" id="3.30.810.10">
    <property type="entry name" value="2-Layer Sandwich"/>
    <property type="match status" value="2"/>
</dbReference>
<dbReference type="Gene3D" id="3.30.800.10">
    <property type="entry name" value="Phosphatidylinositol Phosphate Kinase II Beta"/>
    <property type="match status" value="1"/>
</dbReference>
<dbReference type="InterPro" id="IPR027483">
    <property type="entry name" value="PInositol-4-P-4/5-kinase_C_sf"/>
</dbReference>
<dbReference type="InterPro" id="IPR002498">
    <property type="entry name" value="PInositol-4-P-4/5-kinase_core"/>
</dbReference>
<dbReference type="InterPro" id="IPR027484">
    <property type="entry name" value="PInositol-4-P-5-kinase_N"/>
</dbReference>
<dbReference type="InterPro" id="IPR023610">
    <property type="entry name" value="PInositol-4/5-P-5/4-kinase"/>
</dbReference>
<dbReference type="PANTHER" id="PTHR23086:SF35">
    <property type="entry name" value="PHOSPHATIDYLINOSITOL 5-PHOSPHATE 4-KINASE TYPE-2 GAMMA"/>
    <property type="match status" value="1"/>
</dbReference>
<dbReference type="PANTHER" id="PTHR23086">
    <property type="entry name" value="PHOSPHATIDYLINOSITOL-4-PHOSPHATE 5-KINASE"/>
    <property type="match status" value="1"/>
</dbReference>
<dbReference type="Pfam" id="PF01504">
    <property type="entry name" value="PIP5K"/>
    <property type="match status" value="1"/>
</dbReference>
<dbReference type="SMART" id="SM00330">
    <property type="entry name" value="PIPKc"/>
    <property type="match status" value="1"/>
</dbReference>
<dbReference type="SUPFAM" id="SSF56104">
    <property type="entry name" value="SAICAR synthase-like"/>
    <property type="match status" value="1"/>
</dbReference>
<dbReference type="PROSITE" id="PS51455">
    <property type="entry name" value="PIPK"/>
    <property type="match status" value="1"/>
</dbReference>
<evidence type="ECO:0000250" key="1">
    <source>
        <dbReference type="UniProtKB" id="Q8TBX8"/>
    </source>
</evidence>
<evidence type="ECO:0000255" key="2">
    <source>
        <dbReference type="PROSITE-ProRule" id="PRU00781"/>
    </source>
</evidence>
<evidence type="ECO:0000269" key="3">
    <source>
    </source>
</evidence>
<evidence type="ECO:0000305" key="4"/>
<evidence type="ECO:0000305" key="5">
    <source>
    </source>
</evidence>
<evidence type="ECO:0000312" key="6">
    <source>
        <dbReference type="RGD" id="621711"/>
    </source>
</evidence>
<proteinExistence type="evidence at protein level"/>
<sequence length="420" mass="47049">MASSSVPPATAPAAAGGPGPGFGFASKTKKKHFVQQKVKVFRAADPLVGVFLWGVAHSINELSQVPPPVMLLPDDFKASSKIKVNNHLFHRENLPSHFKFKEYCPQVFRNLRDRFAIDDHDYLVSLTRSPPSETEGSDGRFLISYDRTLVIKEVSSEDIADMHSNLSNYHQYIVKCHGNTLLPQFLGMYRVSVENEDSYMLVMRNMFSHRLPVHRKYDLKGSLVSREASDKEKVKELPTLKDMDFLNKNQKVYIGEEEKKVFLEKLKRDVEFLVQLKIMDYSLLLGIHDIIRGSEPEEEGPVREEESEWDGDCNLTGPPALVGSYGTSPEGIGGYIHSHRPLGPGEFESFIDVYAIRSAEGAPEGGVFHGLIDILTQYDAKKKAAHAAKTVKHGAGAEISTVHPEQYAKRFLDFISNIFA</sequence>
<organism>
    <name type="scientific">Rattus norvegicus</name>
    <name type="common">Rat</name>
    <dbReference type="NCBI Taxonomy" id="10116"/>
    <lineage>
        <taxon>Eukaryota</taxon>
        <taxon>Metazoa</taxon>
        <taxon>Chordata</taxon>
        <taxon>Craniata</taxon>
        <taxon>Vertebrata</taxon>
        <taxon>Euteleostomi</taxon>
        <taxon>Mammalia</taxon>
        <taxon>Eutheria</taxon>
        <taxon>Euarchontoglires</taxon>
        <taxon>Glires</taxon>
        <taxon>Rodentia</taxon>
        <taxon>Myomorpha</taxon>
        <taxon>Muroidea</taxon>
        <taxon>Muridae</taxon>
        <taxon>Murinae</taxon>
        <taxon>Rattus</taxon>
    </lineage>
</organism>
<reference key="1">
    <citation type="journal article" date="1998" name="J. Biol. Chem.">
        <title>A novel phosphatidylinositol-5-phosphate 4-kinase (phosphatidylinositol-phosphate kinase IIgamma) is phosphorylated in the endoplasmic reticulum in response to mitogenic signals.</title>
        <authorList>
            <person name="Itoh T."/>
            <person name="Ijuin T."/>
            <person name="Takenawa T."/>
        </authorList>
    </citation>
    <scope>NUCLEOTIDE SEQUENCE [MRNA]</scope>
    <scope>PHOSPHORYLATION</scope>
    <scope>TISSUE SPECIFICITY</scope>
    <scope>FUNCTION</scope>
    <scope>CATALYTIC ACTIVITY</scope>
</reference>
<feature type="initiator methionine" description="Removed" evidence="1">
    <location>
        <position position="1"/>
    </location>
</feature>
<feature type="chain" id="PRO_0000285753" description="Phosphatidylinositol 5-phosphate 4-kinase type-2 gamma">
    <location>
        <begin position="2"/>
        <end position="420"/>
    </location>
</feature>
<feature type="domain" description="PIPK" evidence="2">
    <location>
        <begin position="43"/>
        <end position="419"/>
    </location>
</feature>
<feature type="region of interest" description="Required for interaction with PIP5K1A" evidence="1">
    <location>
        <begin position="69"/>
        <end position="75"/>
    </location>
</feature>
<feature type="modified residue" description="N-acetylalanine" evidence="1">
    <location>
        <position position="2"/>
    </location>
</feature>
<feature type="modified residue" description="Phosphoserine" evidence="1">
    <location>
        <position position="26"/>
    </location>
</feature>
<feature type="modified residue" description="Phosphoserine" evidence="1">
    <location>
        <position position="349"/>
    </location>
</feature>
<accession>O88370</accession>
<protein>
    <recommendedName>
        <fullName evidence="4">Phosphatidylinositol 5-phosphate 4-kinase type-2 gamma</fullName>
        <ecNumber evidence="3">2.7.1.149</ecNumber>
    </recommendedName>
    <alternativeName>
        <fullName>Phosphatidylinositol 5-phosphate 4-kinase type II gamma</fullName>
        <shortName>PI(5)P 4-kinase type II gamma</shortName>
        <shortName>PIP4KII-gamma</shortName>
    </alternativeName>
</protein>
<gene>
    <name evidence="6" type="primary">Pip4k2c</name>
    <name type="synonym">Pip5k2c</name>
</gene>